<dbReference type="EMBL" id="AM180088">
    <property type="protein sequence ID" value="CAJ53465.1"/>
    <property type="molecule type" value="Genomic_DNA"/>
</dbReference>
<dbReference type="RefSeq" id="WP_011572563.1">
    <property type="nucleotide sequence ID" value="NC_008212.1"/>
</dbReference>
<dbReference type="SMR" id="Q18EZ9"/>
<dbReference type="GeneID" id="4193431"/>
<dbReference type="KEGG" id="hwa:HQ_3368A"/>
<dbReference type="eggNOG" id="arCOG00497">
    <property type="taxonomic scope" value="Archaea"/>
</dbReference>
<dbReference type="HOGENOM" id="CLU_070010_4_0_2"/>
<dbReference type="Proteomes" id="UP000001975">
    <property type="component" value="Chromosome"/>
</dbReference>
<dbReference type="GO" id="GO:0016787">
    <property type="term" value="F:hydrolase activity"/>
    <property type="evidence" value="ECO:0007669"/>
    <property type="project" value="UniProtKB-UniRule"/>
</dbReference>
<dbReference type="Gene3D" id="3.60.15.10">
    <property type="entry name" value="Ribonuclease Z/Hydroxyacylglutathione hydrolase-like"/>
    <property type="match status" value="1"/>
</dbReference>
<dbReference type="HAMAP" id="MF_00457">
    <property type="entry name" value="UPF0173"/>
    <property type="match status" value="1"/>
</dbReference>
<dbReference type="InterPro" id="IPR001279">
    <property type="entry name" value="Metallo-B-lactamas"/>
</dbReference>
<dbReference type="InterPro" id="IPR036866">
    <property type="entry name" value="RibonucZ/Hydroxyglut_hydro"/>
</dbReference>
<dbReference type="InterPro" id="IPR022877">
    <property type="entry name" value="UPF0173"/>
</dbReference>
<dbReference type="InterPro" id="IPR050114">
    <property type="entry name" value="UPF0173_UPF0282_UlaG_hydrolase"/>
</dbReference>
<dbReference type="NCBIfam" id="NF001911">
    <property type="entry name" value="PRK00685.1"/>
    <property type="match status" value="1"/>
</dbReference>
<dbReference type="PANTHER" id="PTHR43546:SF3">
    <property type="entry name" value="UPF0173 METAL-DEPENDENT HYDROLASE MJ1163"/>
    <property type="match status" value="1"/>
</dbReference>
<dbReference type="PANTHER" id="PTHR43546">
    <property type="entry name" value="UPF0173 METAL-DEPENDENT HYDROLASE MJ1163-RELATED"/>
    <property type="match status" value="1"/>
</dbReference>
<dbReference type="Pfam" id="PF12706">
    <property type="entry name" value="Lactamase_B_2"/>
    <property type="match status" value="1"/>
</dbReference>
<dbReference type="SMART" id="SM00849">
    <property type="entry name" value="Lactamase_B"/>
    <property type="match status" value="1"/>
</dbReference>
<dbReference type="SUPFAM" id="SSF56281">
    <property type="entry name" value="Metallo-hydrolase/oxidoreductase"/>
    <property type="match status" value="1"/>
</dbReference>
<evidence type="ECO:0000255" key="1">
    <source>
        <dbReference type="HAMAP-Rule" id="MF_00457"/>
    </source>
</evidence>
<comment type="similarity">
    <text evidence="1">Belongs to the UPF0173 family.</text>
</comment>
<reference key="1">
    <citation type="journal article" date="2006" name="BMC Genomics">
        <title>The genome of the square archaeon Haloquadratum walsbyi: life at the limits of water activity.</title>
        <authorList>
            <person name="Bolhuis H."/>
            <person name="Palm P."/>
            <person name="Wende A."/>
            <person name="Falb M."/>
            <person name="Rampp M."/>
            <person name="Rodriguez-Valera F."/>
            <person name="Pfeiffer F."/>
            <person name="Oesterhelt D."/>
        </authorList>
    </citation>
    <scope>NUCLEOTIDE SEQUENCE [LARGE SCALE GENOMIC DNA]</scope>
    <source>
        <strain>DSM 16790 / HBSQ001</strain>
    </source>
</reference>
<sequence>MELTWHGHSTWHVNVDGTTFLIDPFFSNPHTERKPTDIKKPDYVLLTHAHADHIGDADVFTDTTVVGVPEMTGYMESEVGFTESIGMNIGGTVECGDAYVTMHRADHTNGLETDYEYSIGVPTGYIISDNKPTRTADTDSTSFYHAGDTGLMSEMKDVIGTYLEPDAAALPTGDHFTMGPTQAAIAAEWLDVDHVFPMHYDTFGPIEIDINELVEEVGSGDTDATVHVLDGDETFIL</sequence>
<feature type="chain" id="PRO_0000367227" description="UPF0173 metal-dependent hydrolase HQ_3368A">
    <location>
        <begin position="1"/>
        <end position="237"/>
    </location>
</feature>
<organism>
    <name type="scientific">Haloquadratum walsbyi (strain DSM 16790 / HBSQ001)</name>
    <dbReference type="NCBI Taxonomy" id="362976"/>
    <lineage>
        <taxon>Archaea</taxon>
        <taxon>Methanobacteriati</taxon>
        <taxon>Methanobacteriota</taxon>
        <taxon>Stenosarchaea group</taxon>
        <taxon>Halobacteria</taxon>
        <taxon>Halobacteriales</taxon>
        <taxon>Haloferacaceae</taxon>
        <taxon>Haloquadratum</taxon>
    </lineage>
</organism>
<proteinExistence type="inferred from homology"/>
<accession>Q18EZ9</accession>
<keyword id="KW-0378">Hydrolase</keyword>
<keyword id="KW-1185">Reference proteome</keyword>
<name>Y3368_HALWD</name>
<protein>
    <recommendedName>
        <fullName evidence="1">UPF0173 metal-dependent hydrolase HQ_3368A</fullName>
    </recommendedName>
</protein>
<gene>
    <name type="ordered locus">HQ_3368A</name>
</gene>